<reference key="1">
    <citation type="journal article" date="2004" name="Proc. Natl. Acad. Sci. U.S.A.">
        <title>Genome sequence of the enterobacterial phytopathogen Erwinia carotovora subsp. atroseptica and characterization of virulence factors.</title>
        <authorList>
            <person name="Bell K.S."/>
            <person name="Sebaihia M."/>
            <person name="Pritchard L."/>
            <person name="Holden M.T.G."/>
            <person name="Hyman L.J."/>
            <person name="Holeva M.C."/>
            <person name="Thomson N.R."/>
            <person name="Bentley S.D."/>
            <person name="Churcher L.J.C."/>
            <person name="Mungall K."/>
            <person name="Atkin R."/>
            <person name="Bason N."/>
            <person name="Brooks K."/>
            <person name="Chillingworth T."/>
            <person name="Clark K."/>
            <person name="Doggett J."/>
            <person name="Fraser A."/>
            <person name="Hance Z."/>
            <person name="Hauser H."/>
            <person name="Jagels K."/>
            <person name="Moule S."/>
            <person name="Norbertczak H."/>
            <person name="Ormond D."/>
            <person name="Price C."/>
            <person name="Quail M.A."/>
            <person name="Sanders M."/>
            <person name="Walker D."/>
            <person name="Whitehead S."/>
            <person name="Salmond G.P.C."/>
            <person name="Birch P.R.J."/>
            <person name="Parkhill J."/>
            <person name="Toth I.K."/>
        </authorList>
    </citation>
    <scope>NUCLEOTIDE SEQUENCE [LARGE SCALE GENOMIC DNA]</scope>
    <source>
        <strain>SCRI 1043 / ATCC BAA-672</strain>
    </source>
</reference>
<gene>
    <name evidence="1" type="primary">rnhA</name>
    <name type="ordered locus">ECA3340</name>
</gene>
<accession>Q6D1V7</accession>
<proteinExistence type="inferred from homology"/>
<comment type="function">
    <text evidence="1">Endonuclease that specifically degrades the RNA of RNA-DNA hybrids.</text>
</comment>
<comment type="catalytic activity">
    <reaction evidence="1">
        <text>Endonucleolytic cleavage to 5'-phosphomonoester.</text>
        <dbReference type="EC" id="3.1.26.4"/>
    </reaction>
</comment>
<comment type="cofactor">
    <cofactor evidence="1">
        <name>Mg(2+)</name>
        <dbReference type="ChEBI" id="CHEBI:18420"/>
    </cofactor>
    <text evidence="1">Binds 1 Mg(2+) ion per subunit. May bind a second metal ion at a regulatory site, or after substrate binding.</text>
</comment>
<comment type="subunit">
    <text evidence="1">Monomer.</text>
</comment>
<comment type="subcellular location">
    <subcellularLocation>
        <location evidence="1">Cytoplasm</location>
    </subcellularLocation>
</comment>
<comment type="similarity">
    <text evidence="1">Belongs to the RNase H family.</text>
</comment>
<feature type="chain" id="PRO_0000195375" description="Ribonuclease H">
    <location>
        <begin position="1"/>
        <end position="154"/>
    </location>
</feature>
<feature type="domain" description="RNase H type-1" evidence="2">
    <location>
        <begin position="1"/>
        <end position="142"/>
    </location>
</feature>
<feature type="binding site" evidence="1">
    <location>
        <position position="10"/>
    </location>
    <ligand>
        <name>Mg(2+)</name>
        <dbReference type="ChEBI" id="CHEBI:18420"/>
        <label>1</label>
    </ligand>
</feature>
<feature type="binding site" evidence="1">
    <location>
        <position position="10"/>
    </location>
    <ligand>
        <name>Mg(2+)</name>
        <dbReference type="ChEBI" id="CHEBI:18420"/>
        <label>2</label>
    </ligand>
</feature>
<feature type="binding site" evidence="1">
    <location>
        <position position="48"/>
    </location>
    <ligand>
        <name>Mg(2+)</name>
        <dbReference type="ChEBI" id="CHEBI:18420"/>
        <label>1</label>
    </ligand>
</feature>
<feature type="binding site" evidence="1">
    <location>
        <position position="70"/>
    </location>
    <ligand>
        <name>Mg(2+)</name>
        <dbReference type="ChEBI" id="CHEBI:18420"/>
        <label>1</label>
    </ligand>
</feature>
<feature type="binding site" evidence="1">
    <location>
        <position position="134"/>
    </location>
    <ligand>
        <name>Mg(2+)</name>
        <dbReference type="ChEBI" id="CHEBI:18420"/>
        <label>2</label>
    </ligand>
</feature>
<evidence type="ECO:0000255" key="1">
    <source>
        <dbReference type="HAMAP-Rule" id="MF_00042"/>
    </source>
</evidence>
<evidence type="ECO:0000255" key="2">
    <source>
        <dbReference type="PROSITE-ProRule" id="PRU00408"/>
    </source>
</evidence>
<name>RNH_PECAS</name>
<sequence>MRKQVEIFTDGSCLGNPGPGGYGAVLRYKQHEKALSAGYRLTTNNRMELMAAIAALETLTTDCDIVLSTDSQYVRQGITSWIHNWKKRSWKTADKKPVKNVDLWKRLDTAIQRHSVRWEWVKGHAGHPENERCDELARAAASAPTLDDTGYQAE</sequence>
<keyword id="KW-0963">Cytoplasm</keyword>
<keyword id="KW-0255">Endonuclease</keyword>
<keyword id="KW-0378">Hydrolase</keyword>
<keyword id="KW-0460">Magnesium</keyword>
<keyword id="KW-0479">Metal-binding</keyword>
<keyword id="KW-0540">Nuclease</keyword>
<keyword id="KW-1185">Reference proteome</keyword>
<dbReference type="EC" id="3.1.26.4" evidence="1"/>
<dbReference type="EMBL" id="BX950851">
    <property type="protein sequence ID" value="CAG76238.1"/>
    <property type="molecule type" value="Genomic_DNA"/>
</dbReference>
<dbReference type="SMR" id="Q6D1V7"/>
<dbReference type="STRING" id="218491.ECA3340"/>
<dbReference type="KEGG" id="eca:ECA3340"/>
<dbReference type="PATRIC" id="fig|218491.5.peg.3391"/>
<dbReference type="eggNOG" id="COG0328">
    <property type="taxonomic scope" value="Bacteria"/>
</dbReference>
<dbReference type="HOGENOM" id="CLU_030894_6_0_6"/>
<dbReference type="OrthoDB" id="7845843at2"/>
<dbReference type="Proteomes" id="UP000007966">
    <property type="component" value="Chromosome"/>
</dbReference>
<dbReference type="GO" id="GO:0005737">
    <property type="term" value="C:cytoplasm"/>
    <property type="evidence" value="ECO:0007669"/>
    <property type="project" value="UniProtKB-SubCell"/>
</dbReference>
<dbReference type="GO" id="GO:0000287">
    <property type="term" value="F:magnesium ion binding"/>
    <property type="evidence" value="ECO:0007669"/>
    <property type="project" value="UniProtKB-UniRule"/>
</dbReference>
<dbReference type="GO" id="GO:0003676">
    <property type="term" value="F:nucleic acid binding"/>
    <property type="evidence" value="ECO:0007669"/>
    <property type="project" value="InterPro"/>
</dbReference>
<dbReference type="GO" id="GO:0004523">
    <property type="term" value="F:RNA-DNA hybrid ribonuclease activity"/>
    <property type="evidence" value="ECO:0007669"/>
    <property type="project" value="UniProtKB-UniRule"/>
</dbReference>
<dbReference type="GO" id="GO:0043137">
    <property type="term" value="P:DNA replication, removal of RNA primer"/>
    <property type="evidence" value="ECO:0007669"/>
    <property type="project" value="TreeGrafter"/>
</dbReference>
<dbReference type="CDD" id="cd09278">
    <property type="entry name" value="RNase_HI_prokaryote_like"/>
    <property type="match status" value="1"/>
</dbReference>
<dbReference type="FunFam" id="3.30.420.10:FF:000008">
    <property type="entry name" value="Ribonuclease H"/>
    <property type="match status" value="1"/>
</dbReference>
<dbReference type="Gene3D" id="3.30.420.10">
    <property type="entry name" value="Ribonuclease H-like superfamily/Ribonuclease H"/>
    <property type="match status" value="1"/>
</dbReference>
<dbReference type="HAMAP" id="MF_00042">
    <property type="entry name" value="RNase_H"/>
    <property type="match status" value="1"/>
</dbReference>
<dbReference type="InterPro" id="IPR050092">
    <property type="entry name" value="RNase_H"/>
</dbReference>
<dbReference type="InterPro" id="IPR012337">
    <property type="entry name" value="RNaseH-like_sf"/>
</dbReference>
<dbReference type="InterPro" id="IPR002156">
    <property type="entry name" value="RNaseH_domain"/>
</dbReference>
<dbReference type="InterPro" id="IPR036397">
    <property type="entry name" value="RNaseH_sf"/>
</dbReference>
<dbReference type="InterPro" id="IPR022892">
    <property type="entry name" value="RNaseHI"/>
</dbReference>
<dbReference type="NCBIfam" id="NF001236">
    <property type="entry name" value="PRK00203.1"/>
    <property type="match status" value="1"/>
</dbReference>
<dbReference type="PANTHER" id="PTHR10642">
    <property type="entry name" value="RIBONUCLEASE H1"/>
    <property type="match status" value="1"/>
</dbReference>
<dbReference type="PANTHER" id="PTHR10642:SF26">
    <property type="entry name" value="RIBONUCLEASE H1"/>
    <property type="match status" value="1"/>
</dbReference>
<dbReference type="Pfam" id="PF00075">
    <property type="entry name" value="RNase_H"/>
    <property type="match status" value="1"/>
</dbReference>
<dbReference type="SUPFAM" id="SSF53098">
    <property type="entry name" value="Ribonuclease H-like"/>
    <property type="match status" value="1"/>
</dbReference>
<dbReference type="PROSITE" id="PS50879">
    <property type="entry name" value="RNASE_H_1"/>
    <property type="match status" value="1"/>
</dbReference>
<organism>
    <name type="scientific">Pectobacterium atrosepticum (strain SCRI 1043 / ATCC BAA-672)</name>
    <name type="common">Erwinia carotovora subsp. atroseptica</name>
    <dbReference type="NCBI Taxonomy" id="218491"/>
    <lineage>
        <taxon>Bacteria</taxon>
        <taxon>Pseudomonadati</taxon>
        <taxon>Pseudomonadota</taxon>
        <taxon>Gammaproteobacteria</taxon>
        <taxon>Enterobacterales</taxon>
        <taxon>Pectobacteriaceae</taxon>
        <taxon>Pectobacterium</taxon>
    </lineage>
</organism>
<protein>
    <recommendedName>
        <fullName evidence="1">Ribonuclease H</fullName>
        <shortName evidence="1">RNase H</shortName>
        <ecNumber evidence="1">3.1.26.4</ecNumber>
    </recommendedName>
</protein>